<name>B3GL1_MOUSE</name>
<evidence type="ECO:0000250" key="1">
    <source>
        <dbReference type="UniProtKB" id="O75752"/>
    </source>
</evidence>
<evidence type="ECO:0000255" key="2"/>
<evidence type="ECO:0000269" key="3">
    <source>
    </source>
</evidence>
<evidence type="ECO:0000269" key="4">
    <source>
    </source>
</evidence>
<evidence type="ECO:0000269" key="5">
    <source ref="1"/>
</evidence>
<evidence type="ECO:0000303" key="6">
    <source>
    </source>
</evidence>
<evidence type="ECO:0000303" key="7">
    <source>
    </source>
</evidence>
<evidence type="ECO:0000305" key="8"/>
<evidence type="ECO:0000312" key="9">
    <source>
        <dbReference type="EMBL" id="BAB68678.1"/>
    </source>
</evidence>
<evidence type="ECO:0000312" key="10">
    <source>
        <dbReference type="MGI" id="MGI:1349405"/>
    </source>
</evidence>
<dbReference type="EC" id="2.4.1.79" evidence="1"/>
<dbReference type="EMBL" id="AB039154">
    <property type="protein sequence ID" value="BAB68678.1"/>
    <property type="molecule type" value="Genomic_DNA"/>
</dbReference>
<dbReference type="EMBL" id="AB039155">
    <property type="protein sequence ID" value="BAB68679.1"/>
    <property type="molecule type" value="Genomic_DNA"/>
</dbReference>
<dbReference type="EMBL" id="AB039156">
    <property type="protein sequence ID" value="BAB68680.1"/>
    <property type="molecule type" value="Genomic_DNA"/>
</dbReference>
<dbReference type="EMBL" id="AB039157">
    <property type="protein sequence ID" value="BAB68681.1"/>
    <property type="molecule type" value="Genomic_DNA"/>
</dbReference>
<dbReference type="EMBL" id="AB039158">
    <property type="protein sequence ID" value="BAB68682.1"/>
    <property type="molecule type" value="Genomic_DNA"/>
</dbReference>
<dbReference type="EMBL" id="AB039159">
    <property type="protein sequence ID" value="BAB68683.1"/>
    <property type="molecule type" value="Genomic_DNA"/>
</dbReference>
<dbReference type="EMBL" id="AB039160">
    <property type="protein sequence ID" value="BAB68684.1"/>
    <property type="molecule type" value="Genomic_DNA"/>
</dbReference>
<dbReference type="EMBL" id="AB039161">
    <property type="protein sequence ID" value="BAB68685.1"/>
    <property type="molecule type" value="Genomic_DNA"/>
</dbReference>
<dbReference type="EMBL" id="AB039162">
    <property type="protein sequence ID" value="BAB68686.1"/>
    <property type="molecule type" value="Genomic_DNA"/>
</dbReference>
<dbReference type="EMBL" id="AF029792">
    <property type="protein sequence ID" value="AAC53525.1"/>
    <property type="molecule type" value="Genomic_DNA"/>
</dbReference>
<dbReference type="EMBL" id="AK003837">
    <property type="protein sequence ID" value="BAB23028.1"/>
    <property type="molecule type" value="mRNA"/>
</dbReference>
<dbReference type="EMBL" id="AK088407">
    <property type="protein sequence ID" value="BAC40336.1"/>
    <property type="molecule type" value="mRNA"/>
</dbReference>
<dbReference type="EMBL" id="BC003835">
    <property type="protein sequence ID" value="AAH03835.3"/>
    <property type="molecule type" value="mRNA"/>
</dbReference>
<dbReference type="CCDS" id="CCDS17406.1"/>
<dbReference type="RefSeq" id="NP_001397566.1">
    <property type="nucleotide sequence ID" value="NM_001410637.1"/>
</dbReference>
<dbReference type="RefSeq" id="NP_001397567.1">
    <property type="nucleotide sequence ID" value="NM_001410638.1"/>
</dbReference>
<dbReference type="RefSeq" id="NP_064410.1">
    <property type="nucleotide sequence ID" value="NM_020026.5"/>
</dbReference>
<dbReference type="RefSeq" id="XP_006501592.1">
    <property type="nucleotide sequence ID" value="XM_006501529.3"/>
</dbReference>
<dbReference type="RefSeq" id="XP_036019016.1">
    <property type="nucleotide sequence ID" value="XM_036163123.1"/>
</dbReference>
<dbReference type="SMR" id="Q920V1"/>
<dbReference type="FunCoup" id="Q920V1">
    <property type="interactions" value="183"/>
</dbReference>
<dbReference type="STRING" id="10090.ENSMUSP00000058363"/>
<dbReference type="CAZy" id="GT31">
    <property type="family name" value="Glycosyltransferase Family 31"/>
</dbReference>
<dbReference type="GlyConnect" id="2808">
    <property type="glycosylation" value="1 N-Linked glycan (1 site)"/>
</dbReference>
<dbReference type="GlyCosmos" id="Q920V1">
    <property type="glycosylation" value="5 sites, 1 glycan"/>
</dbReference>
<dbReference type="GlyGen" id="Q920V1">
    <property type="glycosylation" value="5 sites, 3 N-linked glycans (3 sites)"/>
</dbReference>
<dbReference type="iPTMnet" id="Q920V1"/>
<dbReference type="PhosphoSitePlus" id="Q920V1"/>
<dbReference type="PaxDb" id="10090-ENSMUSP00000058363"/>
<dbReference type="PeptideAtlas" id="Q920V1"/>
<dbReference type="ProteomicsDB" id="277145"/>
<dbReference type="Pumba" id="Q920V1"/>
<dbReference type="Antibodypedia" id="33673">
    <property type="antibodies" value="92 antibodies from 18 providers"/>
</dbReference>
<dbReference type="DNASU" id="26879"/>
<dbReference type="Ensembl" id="ENSMUST00000061826.3">
    <property type="protein sequence ID" value="ENSMUSP00000058363.2"/>
    <property type="gene ID" value="ENSMUSG00000043300.3"/>
</dbReference>
<dbReference type="GeneID" id="26879"/>
<dbReference type="KEGG" id="mmu:26879"/>
<dbReference type="UCSC" id="uc008pmj.2">
    <property type="organism name" value="mouse"/>
</dbReference>
<dbReference type="AGR" id="MGI:1349405"/>
<dbReference type="CTD" id="8706"/>
<dbReference type="MGI" id="MGI:1349405">
    <property type="gene designation" value="B3galnt1"/>
</dbReference>
<dbReference type="VEuPathDB" id="HostDB:ENSMUSG00000043300"/>
<dbReference type="eggNOG" id="KOG2287">
    <property type="taxonomic scope" value="Eukaryota"/>
</dbReference>
<dbReference type="GeneTree" id="ENSGT00940000162252"/>
<dbReference type="HOGENOM" id="CLU_036849_2_4_1"/>
<dbReference type="InParanoid" id="Q920V1"/>
<dbReference type="OMA" id="DICKYRH"/>
<dbReference type="OrthoDB" id="5957813at2759"/>
<dbReference type="PhylomeDB" id="Q920V1"/>
<dbReference type="TreeFam" id="TF318639"/>
<dbReference type="Reactome" id="R-MMU-9840309">
    <property type="pathway name" value="Glycosphingolipid biosynthesis"/>
</dbReference>
<dbReference type="UniPathway" id="UPA00378"/>
<dbReference type="BioGRID-ORCS" id="26879">
    <property type="hits" value="4 hits in 80 CRISPR screens"/>
</dbReference>
<dbReference type="ChiTaRS" id="B3galnt1">
    <property type="organism name" value="mouse"/>
</dbReference>
<dbReference type="PRO" id="PR:Q920V1"/>
<dbReference type="Proteomes" id="UP000000589">
    <property type="component" value="Chromosome 3"/>
</dbReference>
<dbReference type="RNAct" id="Q920V1">
    <property type="molecule type" value="protein"/>
</dbReference>
<dbReference type="Bgee" id="ENSMUSG00000043300">
    <property type="expression patterns" value="Expressed in gastrula and 262 other cell types or tissues"/>
</dbReference>
<dbReference type="GO" id="GO:0000139">
    <property type="term" value="C:Golgi membrane"/>
    <property type="evidence" value="ECO:0007669"/>
    <property type="project" value="UniProtKB-SubCell"/>
</dbReference>
<dbReference type="GO" id="GO:0047273">
    <property type="term" value="F:galactosylgalactosylglucosylceramide beta-D-acetylgalactosaminyltransferase activity"/>
    <property type="evidence" value="ECO:0007669"/>
    <property type="project" value="UniProtKB-EC"/>
</dbReference>
<dbReference type="GO" id="GO:0008499">
    <property type="term" value="F:N-acetyl-beta-D-glucosaminide beta-(1,3)-galactosyltransferase activity"/>
    <property type="evidence" value="ECO:0000314"/>
    <property type="project" value="MGI"/>
</dbReference>
<dbReference type="GO" id="GO:0006629">
    <property type="term" value="P:lipid metabolic process"/>
    <property type="evidence" value="ECO:0007669"/>
    <property type="project" value="UniProtKB-KW"/>
</dbReference>
<dbReference type="GO" id="GO:0009312">
    <property type="term" value="P:oligosaccharide biosynthetic process"/>
    <property type="evidence" value="ECO:0000314"/>
    <property type="project" value="MGI"/>
</dbReference>
<dbReference type="GO" id="GO:0006486">
    <property type="term" value="P:protein glycosylation"/>
    <property type="evidence" value="ECO:0007669"/>
    <property type="project" value="UniProtKB-UniPathway"/>
</dbReference>
<dbReference type="FunFam" id="3.90.550.50:FF:000001">
    <property type="entry name" value="Hexosyltransferase"/>
    <property type="match status" value="1"/>
</dbReference>
<dbReference type="Gene3D" id="3.90.550.50">
    <property type="match status" value="1"/>
</dbReference>
<dbReference type="InterPro" id="IPR002659">
    <property type="entry name" value="Glyco_trans_31"/>
</dbReference>
<dbReference type="PANTHER" id="PTHR11214">
    <property type="entry name" value="BETA-1,3-N-ACETYLGLUCOSAMINYLTRANSFERASE"/>
    <property type="match status" value="1"/>
</dbReference>
<dbReference type="PANTHER" id="PTHR11214:SF153">
    <property type="entry name" value="UDP-GALNAC:BETA-1,3-N-ACETYLGALACTOSAMINYLTRANSFERASE 1"/>
    <property type="match status" value="1"/>
</dbReference>
<dbReference type="Pfam" id="PF01762">
    <property type="entry name" value="Galactosyl_T"/>
    <property type="match status" value="1"/>
</dbReference>
<proteinExistence type="evidence at transcript level"/>
<protein>
    <recommendedName>
        <fullName>UDP-GalNAc:beta-1,3-N-acetylgalactosaminyltransferase 1</fullName>
        <shortName>Beta-1,3-GalNAc-T1</shortName>
        <ecNumber evidence="1">2.4.1.79</ecNumber>
    </recommendedName>
    <alternativeName>
        <fullName>Beta-1,3-galactosyltransferase 3</fullName>
        <shortName>Beta-1,3-GalTase 3</shortName>
        <shortName>Beta3Gal-T3</shortName>
        <shortName>Beta3GalT3</shortName>
        <shortName>b3Gal-T3</shortName>
    </alternativeName>
    <alternativeName>
        <fullName>Beta-3-Gx-T3</fullName>
    </alternativeName>
    <alternativeName>
        <fullName evidence="6">Brainiac 1</fullName>
    </alternativeName>
    <alternativeName>
        <fullName>Galactosylgalactosylglucosylceramide beta-D-acetyl-galactosaminyltransferase</fullName>
    </alternativeName>
    <alternativeName>
        <fullName>Globoside synthase</fullName>
    </alternativeName>
    <alternativeName>
        <fullName>UDP-N-acetylgalactosamine:globotriaosylceramide beta-1,3-N-acetylgalactosaminyltransferase</fullName>
    </alternativeName>
</protein>
<organism>
    <name type="scientific">Mus musculus</name>
    <name type="common">Mouse</name>
    <dbReference type="NCBI Taxonomy" id="10090"/>
    <lineage>
        <taxon>Eukaryota</taxon>
        <taxon>Metazoa</taxon>
        <taxon>Chordata</taxon>
        <taxon>Craniata</taxon>
        <taxon>Vertebrata</taxon>
        <taxon>Euteleostomi</taxon>
        <taxon>Mammalia</taxon>
        <taxon>Eutheria</taxon>
        <taxon>Euarchontoglires</taxon>
        <taxon>Glires</taxon>
        <taxon>Rodentia</taxon>
        <taxon>Myomorpha</taxon>
        <taxon>Muroidea</taxon>
        <taxon>Muridae</taxon>
        <taxon>Murinae</taxon>
        <taxon>Mus</taxon>
        <taxon>Mus</taxon>
    </lineage>
</organism>
<keyword id="KW-0325">Glycoprotein</keyword>
<keyword id="KW-0328">Glycosyltransferase</keyword>
<keyword id="KW-0333">Golgi apparatus</keyword>
<keyword id="KW-0443">Lipid metabolism</keyword>
<keyword id="KW-0460">Magnesium</keyword>
<keyword id="KW-0472">Membrane</keyword>
<keyword id="KW-1185">Reference proteome</keyword>
<keyword id="KW-0735">Signal-anchor</keyword>
<keyword id="KW-0808">Transferase</keyword>
<keyword id="KW-0812">Transmembrane</keyword>
<keyword id="KW-1133">Transmembrane helix</keyword>
<accession>Q920V1</accession>
<accession>O54906</accession>
<accession>Q91V72</accession>
<accession>Q920V0</accession>
<accession>Q9CTE5</accession>
<sequence>MAPAVLTALPNRMSLRSLKWSLLLLSLLSFLVIWYLSLPHYNVIERVNWMYFYEYEPIYRQDFRFTLREHSNCSHQNPFLVILVTSRPSDVKARQAIRVTWGEKKSWWGYEVLTFFLLGQQAEREDKTLALSLEDEHVLYGDIIRQDFLDTYNNLTLKTIMAFRWVMEFCPNAKYIMKTDTDVFINTGNLVKYLLNLNHSEKFFTGYPLIDNYSYRGFFHKNHISYQEYPFKVFPPYCSGLGYIMSGDLVPRVYEMMSHVKPIKFEDVYVGICLNLLKVDIHIPEDTNLFFLYRIHLDVCQLRRVIAAHGFSSKEIITFWQVMLRNTTCHY</sequence>
<gene>
    <name evidence="10" type="primary">B3galnt1</name>
    <name evidence="7" type="synonym">B3galt3</name>
    <name evidence="9" type="synonym">B3gt3</name>
    <name evidence="6" type="synonym">Mbrn1</name>
</gene>
<reference key="1">
    <citation type="submission" date="2000-02" db="EMBL/GenBank/DDBJ databases">
        <title>Conspicuous differences among gene genealogies of 21 nuclear genes of five Mus musculus subspecies.</title>
        <authorList>
            <person name="Liu Y."/>
            <person name="Kitano T."/>
            <person name="Koide T."/>
            <person name="Shiroishi T."/>
            <person name="Moriwaki K."/>
            <person name="Saitou N."/>
        </authorList>
    </citation>
    <scope>NUCLEOTIDE SEQUENCE [GENOMIC DNA]</scope>
    <scope>VARIANTS THR-4; HIS-87 AND MET-128</scope>
    <source>
        <strain>BFM/2Msf</strain>
        <strain>BLG2/Msf</strain>
        <strain>C57BL/10SnJ</strain>
        <strain>CAST/EiJ</strain>
        <strain>HMI/Msf</strain>
        <strain>MSM/Msf</strain>
        <strain>NJL/Msf</strain>
        <strain>Pgn2</strain>
        <strain>SWN/Msf</strain>
    </source>
</reference>
<reference key="2">
    <citation type="journal article" date="1998" name="J. Biol. Chem.">
        <title>Genomic cloning and expression of three murine UDP-galactose: beta-N-acetylglucosamine beta1,3-galactosyltransferase genes.</title>
        <authorList>
            <person name="Hennet T."/>
            <person name="Dinter A."/>
            <person name="Kuhnert P."/>
            <person name="Mattu T.S."/>
            <person name="Rudd P.M."/>
            <person name="Berger E.G."/>
        </authorList>
    </citation>
    <scope>NUCLEOTIDE SEQUENCE [GENOMIC DNA]</scope>
    <scope>FUNCTION</scope>
    <scope>TISSUE SPECIFICITY</scope>
    <source>
        <strain>129/SvJ</strain>
    </source>
</reference>
<reference key="3">
    <citation type="journal article" date="2005" name="Science">
        <title>The transcriptional landscape of the mammalian genome.</title>
        <authorList>
            <person name="Carninci P."/>
            <person name="Kasukawa T."/>
            <person name="Katayama S."/>
            <person name="Gough J."/>
            <person name="Frith M.C."/>
            <person name="Maeda N."/>
            <person name="Oyama R."/>
            <person name="Ravasi T."/>
            <person name="Lenhard B."/>
            <person name="Wells C."/>
            <person name="Kodzius R."/>
            <person name="Shimokawa K."/>
            <person name="Bajic V.B."/>
            <person name="Brenner S.E."/>
            <person name="Batalov S."/>
            <person name="Forrest A.R."/>
            <person name="Zavolan M."/>
            <person name="Davis M.J."/>
            <person name="Wilming L.G."/>
            <person name="Aidinis V."/>
            <person name="Allen J.E."/>
            <person name="Ambesi-Impiombato A."/>
            <person name="Apweiler R."/>
            <person name="Aturaliya R.N."/>
            <person name="Bailey T.L."/>
            <person name="Bansal M."/>
            <person name="Baxter L."/>
            <person name="Beisel K.W."/>
            <person name="Bersano T."/>
            <person name="Bono H."/>
            <person name="Chalk A.M."/>
            <person name="Chiu K.P."/>
            <person name="Choudhary V."/>
            <person name="Christoffels A."/>
            <person name="Clutterbuck D.R."/>
            <person name="Crowe M.L."/>
            <person name="Dalla E."/>
            <person name="Dalrymple B.P."/>
            <person name="de Bono B."/>
            <person name="Della Gatta G."/>
            <person name="di Bernardo D."/>
            <person name="Down T."/>
            <person name="Engstrom P."/>
            <person name="Fagiolini M."/>
            <person name="Faulkner G."/>
            <person name="Fletcher C.F."/>
            <person name="Fukushima T."/>
            <person name="Furuno M."/>
            <person name="Futaki S."/>
            <person name="Gariboldi M."/>
            <person name="Georgii-Hemming P."/>
            <person name="Gingeras T.R."/>
            <person name="Gojobori T."/>
            <person name="Green R.E."/>
            <person name="Gustincich S."/>
            <person name="Harbers M."/>
            <person name="Hayashi Y."/>
            <person name="Hensch T.K."/>
            <person name="Hirokawa N."/>
            <person name="Hill D."/>
            <person name="Huminiecki L."/>
            <person name="Iacono M."/>
            <person name="Ikeo K."/>
            <person name="Iwama A."/>
            <person name="Ishikawa T."/>
            <person name="Jakt M."/>
            <person name="Kanapin A."/>
            <person name="Katoh M."/>
            <person name="Kawasawa Y."/>
            <person name="Kelso J."/>
            <person name="Kitamura H."/>
            <person name="Kitano H."/>
            <person name="Kollias G."/>
            <person name="Krishnan S.P."/>
            <person name="Kruger A."/>
            <person name="Kummerfeld S.K."/>
            <person name="Kurochkin I.V."/>
            <person name="Lareau L.F."/>
            <person name="Lazarevic D."/>
            <person name="Lipovich L."/>
            <person name="Liu J."/>
            <person name="Liuni S."/>
            <person name="McWilliam S."/>
            <person name="Madan Babu M."/>
            <person name="Madera M."/>
            <person name="Marchionni L."/>
            <person name="Matsuda H."/>
            <person name="Matsuzawa S."/>
            <person name="Miki H."/>
            <person name="Mignone F."/>
            <person name="Miyake S."/>
            <person name="Morris K."/>
            <person name="Mottagui-Tabar S."/>
            <person name="Mulder N."/>
            <person name="Nakano N."/>
            <person name="Nakauchi H."/>
            <person name="Ng P."/>
            <person name="Nilsson R."/>
            <person name="Nishiguchi S."/>
            <person name="Nishikawa S."/>
            <person name="Nori F."/>
            <person name="Ohara O."/>
            <person name="Okazaki Y."/>
            <person name="Orlando V."/>
            <person name="Pang K.C."/>
            <person name="Pavan W.J."/>
            <person name="Pavesi G."/>
            <person name="Pesole G."/>
            <person name="Petrovsky N."/>
            <person name="Piazza S."/>
            <person name="Reed J."/>
            <person name="Reid J.F."/>
            <person name="Ring B.Z."/>
            <person name="Ringwald M."/>
            <person name="Rost B."/>
            <person name="Ruan Y."/>
            <person name="Salzberg S.L."/>
            <person name="Sandelin A."/>
            <person name="Schneider C."/>
            <person name="Schoenbach C."/>
            <person name="Sekiguchi K."/>
            <person name="Semple C.A."/>
            <person name="Seno S."/>
            <person name="Sessa L."/>
            <person name="Sheng Y."/>
            <person name="Shibata Y."/>
            <person name="Shimada H."/>
            <person name="Shimada K."/>
            <person name="Silva D."/>
            <person name="Sinclair B."/>
            <person name="Sperling S."/>
            <person name="Stupka E."/>
            <person name="Sugiura K."/>
            <person name="Sultana R."/>
            <person name="Takenaka Y."/>
            <person name="Taki K."/>
            <person name="Tammoja K."/>
            <person name="Tan S.L."/>
            <person name="Tang S."/>
            <person name="Taylor M.S."/>
            <person name="Tegner J."/>
            <person name="Teichmann S.A."/>
            <person name="Ueda H.R."/>
            <person name="van Nimwegen E."/>
            <person name="Verardo R."/>
            <person name="Wei C.L."/>
            <person name="Yagi K."/>
            <person name="Yamanishi H."/>
            <person name="Zabarovsky E."/>
            <person name="Zhu S."/>
            <person name="Zimmer A."/>
            <person name="Hide W."/>
            <person name="Bult C."/>
            <person name="Grimmond S.M."/>
            <person name="Teasdale R.D."/>
            <person name="Liu E.T."/>
            <person name="Brusic V."/>
            <person name="Quackenbush J."/>
            <person name="Wahlestedt C."/>
            <person name="Mattick J.S."/>
            <person name="Hume D.A."/>
            <person name="Kai C."/>
            <person name="Sasaki D."/>
            <person name="Tomaru Y."/>
            <person name="Fukuda S."/>
            <person name="Kanamori-Katayama M."/>
            <person name="Suzuki M."/>
            <person name="Aoki J."/>
            <person name="Arakawa T."/>
            <person name="Iida J."/>
            <person name="Imamura K."/>
            <person name="Itoh M."/>
            <person name="Kato T."/>
            <person name="Kawaji H."/>
            <person name="Kawagashira N."/>
            <person name="Kawashima T."/>
            <person name="Kojima M."/>
            <person name="Kondo S."/>
            <person name="Konno H."/>
            <person name="Nakano K."/>
            <person name="Ninomiya N."/>
            <person name="Nishio T."/>
            <person name="Okada M."/>
            <person name="Plessy C."/>
            <person name="Shibata K."/>
            <person name="Shiraki T."/>
            <person name="Suzuki S."/>
            <person name="Tagami M."/>
            <person name="Waki K."/>
            <person name="Watahiki A."/>
            <person name="Okamura-Oho Y."/>
            <person name="Suzuki H."/>
            <person name="Kawai J."/>
            <person name="Hayashizaki Y."/>
        </authorList>
    </citation>
    <scope>NUCLEOTIDE SEQUENCE [LARGE SCALE MRNA]</scope>
    <source>
        <strain>C57BL/6J</strain>
        <strain>NOD</strain>
        <tissue>Embryo</tissue>
        <tissue>Thymus</tissue>
    </source>
</reference>
<reference key="4">
    <citation type="journal article" date="2004" name="Genome Res.">
        <title>The status, quality, and expansion of the NIH full-length cDNA project: the Mammalian Gene Collection (MGC).</title>
        <authorList>
            <consortium name="The MGC Project Team"/>
        </authorList>
    </citation>
    <scope>NUCLEOTIDE SEQUENCE [LARGE SCALE MRNA]</scope>
    <source>
        <strain>C57BL/6J</strain>
        <tissue>Embryo</tissue>
    </source>
</reference>
<reference key="5">
    <citation type="journal article" date="2001" name="Mol. Cell. Biol.">
        <title>A murine homologue of the Drosophila brainiac gene shows homology to glycosyltransferases and is required for preimplantation development of the mouse.</title>
        <authorList>
            <person name="Vollrath B."/>
            <person name="Fitzgerald K.J."/>
            <person name="Leder P."/>
        </authorList>
    </citation>
    <scope>FUNCTION</scope>
    <scope>TISSUE SPECIFICITY</scope>
    <scope>DEVELOPMENTAL STAGE</scope>
    <scope>DISRUPTION PHENOTYPE</scope>
</reference>
<comment type="function">
    <text evidence="3 4">Transfers N-acetylgalactosamine onto globotriaosylceramide (PubMed:9417047). Plays a critical role in preimplantation stage embryonic development (PubMed:11463849).</text>
</comment>
<comment type="catalytic activity">
    <reaction evidence="1">
        <text>a globoside Gb3Cer (d18:1(4E)) + UDP-N-acetyl-alpha-D-galactosamine = a globoside Gb4Cer (d18:1(4E)) + UDP + H(+)</text>
        <dbReference type="Rhea" id="RHEA:22252"/>
        <dbReference type="ChEBI" id="CHEBI:15378"/>
        <dbReference type="ChEBI" id="CHEBI:18259"/>
        <dbReference type="ChEBI" id="CHEBI:18313"/>
        <dbReference type="ChEBI" id="CHEBI:58223"/>
        <dbReference type="ChEBI" id="CHEBI:67138"/>
        <dbReference type="EC" id="2.4.1.79"/>
    </reaction>
    <physiologicalReaction direction="left-to-right" evidence="1">
        <dbReference type="Rhea" id="RHEA:22253"/>
    </physiologicalReaction>
</comment>
<comment type="cofactor">
    <cofactor>
        <name>Mg(2+)</name>
        <dbReference type="ChEBI" id="CHEBI:18420"/>
    </cofactor>
</comment>
<comment type="pathway">
    <text>Protein modification; protein glycosylation.</text>
</comment>
<comment type="subcellular location">
    <subcellularLocation>
        <location evidence="1">Golgi apparatus membrane</location>
        <topology evidence="1">Single-pass type II membrane protein</topology>
    </subcellularLocation>
</comment>
<comment type="tissue specificity">
    <text evidence="3 4">Detected in brain, ovary, kidney, uterus and stomach (PubMed:11463849, PubMed:9417047). In ovary, specifically expressed in follicular granulosa cells and shows particularly strong expression at later stages of follicle development (PubMed:11463849).</text>
</comment>
<comment type="developmental stage">
    <text evidence="3">Detected in embryos from 12.5 days post coitum (dpc) onwards. Expressed in all four ventricles of the developing brain, with highest expression in the outer ventricular layer. Also found in the limb buds at 12.5 dpc. Detected in the brain (hippocampus) and retina at postnatal day 1. Expression in the retina is localized to the ganglion cell layer. At postnatal day 10, expression remains strong in the hippocampus where it localizes to the four CA fields and the dentate gyrus.</text>
</comment>
<comment type="disruption phenotype">
    <text evidence="3">Embryonic lethal. Lethality occurs at the preimplantation stage, between 3.5 and 4.5 days post-coitum (dpc).</text>
</comment>
<comment type="similarity">
    <text evidence="8">Belongs to the glycosyltransferase 31 family.</text>
</comment>
<comment type="online information" name="Functional Glycomics Gateway - GTase">
    <link uri="http://www.functionalglycomics.org/glycomics/molecule/jsp/glycoEnzyme/viewGlycoEnzyme.jsp?gbpId=gt_mou_456"/>
    <text>b3GalT3</text>
</comment>
<feature type="chain" id="PRO_0000219154" description="UDP-GalNAc:beta-1,3-N-acetylgalactosaminyltransferase 1">
    <location>
        <begin position="1"/>
        <end position="331"/>
    </location>
</feature>
<feature type="topological domain" description="Cytoplasmic" evidence="2">
    <location>
        <begin position="1"/>
        <end position="20"/>
    </location>
</feature>
<feature type="transmembrane region" description="Helical; Signal-anchor for type II membrane protein" evidence="2">
    <location>
        <begin position="21"/>
        <end position="43"/>
    </location>
</feature>
<feature type="topological domain" description="Lumenal" evidence="2">
    <location>
        <begin position="44"/>
        <end position="331"/>
    </location>
</feature>
<feature type="glycosylation site" description="N-linked (GlcNAc...) asparagine" evidence="2">
    <location>
        <position position="72"/>
    </location>
</feature>
<feature type="glycosylation site" description="N-linked (GlcNAc...) asparagine" evidence="2">
    <location>
        <position position="154"/>
    </location>
</feature>
<feature type="glycosylation site" description="N-linked (GlcNAc...) asparagine" evidence="2">
    <location>
        <position position="198"/>
    </location>
</feature>
<feature type="glycosylation site" description="N-linked (GlcNAc...) asparagine" evidence="2">
    <location>
        <position position="212"/>
    </location>
</feature>
<feature type="glycosylation site" description="N-linked (GlcNAc...) asparagine" evidence="2">
    <location>
        <position position="326"/>
    </location>
</feature>
<feature type="sequence variant" description="In strain: NJL/Msf, BLG2/Msf, MSM/Msf and SWN/Msf." evidence="5">
    <original>A</original>
    <variation>T</variation>
    <location>
        <position position="4"/>
    </location>
</feature>
<feature type="sequence variant" description="In strain: SWN/Msf." evidence="5">
    <original>R</original>
    <variation>H</variation>
    <location>
        <position position="87"/>
    </location>
</feature>
<feature type="sequence variant" description="In strain: CAST/Ei." evidence="5">
    <original>T</original>
    <variation>M</variation>
    <location>
        <position position="128"/>
    </location>
</feature>